<proteinExistence type="predicted"/>
<sequence length="384" mass="42136">MVPELIAETAVTHFSDVYRPVQVVHKMIDKLKRKRDHSVKDVPQLQMANLSDNPTAQIIRAPKRTKLDAMLEGIMRVGDDMYDHAQPDNFSPLALIPVVNEKGHSPLSLIDLHAANEASNGLITGSGYAHTPYQADLADAHIIKIQQGTAYYEIDSQLMAQEFGDKSFGAFADEAYASERGYAIRTNPHTGNKEMFVAGTRNGWDWASNALEVTGASHILNNPVHSGVRAGEVGYMYATGNPVPPEYLGLAEKVADTIETPNGRIATPWRAKAQEFYSQVVVDEEVDVVYGHSRGGAIVADMQLPAAVTKIGLDSAMILADNKGMINFYQGGRGFDPGHPIAWFKSQVDMALGSTGENNIHLEVEGMHTHELWNHDSEDYMLEP</sequence>
<keyword id="KW-1185">Reference proteome</keyword>
<accession>P0DOK3</accession>
<organismHost>
    <name type="scientific">Chaetoceros setoense</name>
    <dbReference type="NCBI Taxonomy" id="1290580"/>
</organismHost>
<reference key="1">
    <citation type="journal article" date="2013" name="Sci. Rep.">
        <title>New single-stranded DNA virus with a unique genomic structure that infects marine diatom Chaetoceros setoensis.</title>
        <authorList>
            <person name="Tomaru Y."/>
            <person name="Toyoda K."/>
            <person name="Suzuki H."/>
            <person name="Nagumo T."/>
            <person name="Kimura K."/>
            <person name="Takao Y."/>
        </authorList>
    </citation>
    <scope>NUCLEOTIDE SEQUENCE [LARGE SCALE GENOMIC DNA]</scope>
</reference>
<dbReference type="EMBL" id="AB781089">
    <property type="status" value="NOT_ANNOTATED_CDS"/>
    <property type="molecule type" value="Genomic_DNA"/>
</dbReference>
<dbReference type="Proteomes" id="UP000817156">
    <property type="component" value="Segment"/>
</dbReference>
<name>VP1_CDDV1</name>
<organism>
    <name type="scientific">Chaetoceros diatodnavirus 1</name>
    <name type="common">Chaetoceros setoense DNA virus</name>
    <dbReference type="NCBI Taxonomy" id="1290581"/>
    <lineage>
        <taxon>Viruses</taxon>
        <taxon>Monodnaviria</taxon>
        <taxon>Shotokuvirae</taxon>
        <taxon>Cressdnaviricota</taxon>
        <taxon>Arfiviricetes</taxon>
        <taxon>Baphyvirales</taxon>
        <taxon>Bacilladnaviridae</taxon>
        <taxon>Diatodnavirus</taxon>
        <taxon>Diatodnavirus chaese</taxon>
    </lineage>
</organism>
<protein>
    <recommendedName>
        <fullName>Viral protein 1</fullName>
        <shortName>VP1</shortName>
    </recommendedName>
</protein>
<feature type="chain" id="PRO_0000445653" description="Viral protein 1">
    <location>
        <begin position="1"/>
        <end position="384"/>
    </location>
</feature>